<feature type="chain" id="PRO_1000142460" description="Large ribosomal subunit protein uL5">
    <location>
        <begin position="1"/>
        <end position="180"/>
    </location>
</feature>
<keyword id="KW-0687">Ribonucleoprotein</keyword>
<keyword id="KW-0689">Ribosomal protein</keyword>
<keyword id="KW-0694">RNA-binding</keyword>
<keyword id="KW-0699">rRNA-binding</keyword>
<keyword id="KW-0820">tRNA-binding</keyword>
<sequence>MANRLKEKYTNEVIPALTEKFNYTSVMAVPKVEKIVLNMGVGDAVSNAKNLEKAAAELALISGQKPLITKAKKSIAGFRLREGVAIGAKVTLRGERMYEFLDKLVSVSLPRVRDFHGVPTKSFDGRGNYTLGVKEQLIFPEISFDDVDKVRGLDIVIVTTANTDEESRELLKALGMPFAK</sequence>
<reference key="1">
    <citation type="journal article" date="2008" name="J. Bacteriol.">
        <title>Genome sequence of a nephritogenic and highly transformable M49 strain of Streptococcus pyogenes.</title>
        <authorList>
            <person name="McShan W.M."/>
            <person name="Ferretti J.J."/>
            <person name="Karasawa T."/>
            <person name="Suvorov A.N."/>
            <person name="Lin S."/>
            <person name="Qin B."/>
            <person name="Jia H."/>
            <person name="Kenton S."/>
            <person name="Najar F."/>
            <person name="Wu H."/>
            <person name="Scott J."/>
            <person name="Roe B.A."/>
            <person name="Savic D.J."/>
        </authorList>
    </citation>
    <scope>NUCLEOTIDE SEQUENCE [LARGE SCALE GENOMIC DNA]</scope>
    <source>
        <strain>NZ131</strain>
    </source>
</reference>
<name>RL5_STRPZ</name>
<comment type="function">
    <text evidence="1">This is one of the proteins that bind and probably mediate the attachment of the 5S RNA into the large ribosomal subunit, where it forms part of the central protuberance. In the 70S ribosome it contacts protein S13 of the 30S subunit (bridge B1b), connecting the 2 subunits; this bridge is implicated in subunit movement. Contacts the P site tRNA; the 5S rRNA and some of its associated proteins might help stabilize positioning of ribosome-bound tRNAs.</text>
</comment>
<comment type="subunit">
    <text evidence="1">Part of the 50S ribosomal subunit; part of the 5S rRNA/L5/L18/L25 subcomplex. Contacts the 5S rRNA and the P site tRNA. Forms a bridge to the 30S subunit in the 70S ribosome.</text>
</comment>
<comment type="similarity">
    <text evidence="1">Belongs to the universal ribosomal protein uL5 family.</text>
</comment>
<gene>
    <name evidence="1" type="primary">rplE</name>
    <name type="ordered locus">Spy49_0059</name>
</gene>
<accession>B5XJ48</accession>
<protein>
    <recommendedName>
        <fullName evidence="1">Large ribosomal subunit protein uL5</fullName>
    </recommendedName>
    <alternativeName>
        <fullName evidence="2">50S ribosomal protein L5</fullName>
    </alternativeName>
</protein>
<dbReference type="EMBL" id="CP000829">
    <property type="protein sequence ID" value="ACI60416.1"/>
    <property type="molecule type" value="Genomic_DNA"/>
</dbReference>
<dbReference type="SMR" id="B5XJ48"/>
<dbReference type="KEGG" id="soz:Spy49_0059"/>
<dbReference type="HOGENOM" id="CLU_061015_2_1_9"/>
<dbReference type="Proteomes" id="UP000001039">
    <property type="component" value="Chromosome"/>
</dbReference>
<dbReference type="GO" id="GO:1990904">
    <property type="term" value="C:ribonucleoprotein complex"/>
    <property type="evidence" value="ECO:0007669"/>
    <property type="project" value="UniProtKB-KW"/>
</dbReference>
<dbReference type="GO" id="GO:0005840">
    <property type="term" value="C:ribosome"/>
    <property type="evidence" value="ECO:0007669"/>
    <property type="project" value="UniProtKB-KW"/>
</dbReference>
<dbReference type="GO" id="GO:0019843">
    <property type="term" value="F:rRNA binding"/>
    <property type="evidence" value="ECO:0007669"/>
    <property type="project" value="UniProtKB-UniRule"/>
</dbReference>
<dbReference type="GO" id="GO:0003735">
    <property type="term" value="F:structural constituent of ribosome"/>
    <property type="evidence" value="ECO:0007669"/>
    <property type="project" value="InterPro"/>
</dbReference>
<dbReference type="GO" id="GO:0000049">
    <property type="term" value="F:tRNA binding"/>
    <property type="evidence" value="ECO:0007669"/>
    <property type="project" value="UniProtKB-UniRule"/>
</dbReference>
<dbReference type="GO" id="GO:0006412">
    <property type="term" value="P:translation"/>
    <property type="evidence" value="ECO:0007669"/>
    <property type="project" value="UniProtKB-UniRule"/>
</dbReference>
<dbReference type="FunFam" id="3.30.1440.10:FF:000001">
    <property type="entry name" value="50S ribosomal protein L5"/>
    <property type="match status" value="1"/>
</dbReference>
<dbReference type="Gene3D" id="3.30.1440.10">
    <property type="match status" value="1"/>
</dbReference>
<dbReference type="HAMAP" id="MF_01333_B">
    <property type="entry name" value="Ribosomal_uL5_B"/>
    <property type="match status" value="1"/>
</dbReference>
<dbReference type="InterPro" id="IPR002132">
    <property type="entry name" value="Ribosomal_uL5"/>
</dbReference>
<dbReference type="InterPro" id="IPR020930">
    <property type="entry name" value="Ribosomal_uL5_bac-type"/>
</dbReference>
<dbReference type="InterPro" id="IPR031309">
    <property type="entry name" value="Ribosomal_uL5_C"/>
</dbReference>
<dbReference type="InterPro" id="IPR020929">
    <property type="entry name" value="Ribosomal_uL5_CS"/>
</dbReference>
<dbReference type="InterPro" id="IPR022803">
    <property type="entry name" value="Ribosomal_uL5_dom_sf"/>
</dbReference>
<dbReference type="InterPro" id="IPR031310">
    <property type="entry name" value="Ribosomal_uL5_N"/>
</dbReference>
<dbReference type="NCBIfam" id="NF000585">
    <property type="entry name" value="PRK00010.1"/>
    <property type="match status" value="1"/>
</dbReference>
<dbReference type="PANTHER" id="PTHR11994">
    <property type="entry name" value="60S RIBOSOMAL PROTEIN L11-RELATED"/>
    <property type="match status" value="1"/>
</dbReference>
<dbReference type="Pfam" id="PF00281">
    <property type="entry name" value="Ribosomal_L5"/>
    <property type="match status" value="1"/>
</dbReference>
<dbReference type="Pfam" id="PF00673">
    <property type="entry name" value="Ribosomal_L5_C"/>
    <property type="match status" value="1"/>
</dbReference>
<dbReference type="PIRSF" id="PIRSF002161">
    <property type="entry name" value="Ribosomal_L5"/>
    <property type="match status" value="1"/>
</dbReference>
<dbReference type="SUPFAM" id="SSF55282">
    <property type="entry name" value="RL5-like"/>
    <property type="match status" value="1"/>
</dbReference>
<dbReference type="PROSITE" id="PS00358">
    <property type="entry name" value="RIBOSOMAL_L5"/>
    <property type="match status" value="1"/>
</dbReference>
<evidence type="ECO:0000255" key="1">
    <source>
        <dbReference type="HAMAP-Rule" id="MF_01333"/>
    </source>
</evidence>
<evidence type="ECO:0000305" key="2"/>
<organism>
    <name type="scientific">Streptococcus pyogenes serotype M49 (strain NZ131)</name>
    <dbReference type="NCBI Taxonomy" id="471876"/>
    <lineage>
        <taxon>Bacteria</taxon>
        <taxon>Bacillati</taxon>
        <taxon>Bacillota</taxon>
        <taxon>Bacilli</taxon>
        <taxon>Lactobacillales</taxon>
        <taxon>Streptococcaceae</taxon>
        <taxon>Streptococcus</taxon>
    </lineage>
</organism>
<proteinExistence type="inferred from homology"/>